<comment type="similarity">
    <text evidence="2">Belongs to the universal ribosomal protein uL16 family.</text>
</comment>
<organism>
    <name type="scientific">Tetrahymena thermophila (strain SB210)</name>
    <dbReference type="NCBI Taxonomy" id="312017"/>
    <lineage>
        <taxon>Eukaryota</taxon>
        <taxon>Sar</taxon>
        <taxon>Alveolata</taxon>
        <taxon>Ciliophora</taxon>
        <taxon>Intramacronucleata</taxon>
        <taxon>Oligohymenophorea</taxon>
        <taxon>Hymenostomatida</taxon>
        <taxon>Tetrahymenina</taxon>
        <taxon>Tetrahymenidae</taxon>
        <taxon>Tetrahymena</taxon>
    </lineage>
</organism>
<accession>Q235M8</accession>
<sequence>MGRRPARCYRQPKGKPYPKSRYNRGVPDARIRIYDSGRKKATVEEFPYVVHIVSDEKEQITSEALEAARIAANKNLIKFISKDAFHLRCRVHPWHVLRINKMLSCAGADRLQSGMRGAFGKALGKAARVDIGSILFSVRVKEPHVKYAIDALTRAKAKFPGRQKVVTSQKWGFTKLTRAQYSRLRNQKKLVTDGSNVKVIGERGPLSRLELFRKI</sequence>
<name>RL10_TETTS</name>
<dbReference type="EMBL" id="GG662759">
    <property type="protein sequence ID" value="EAR92252.1"/>
    <property type="molecule type" value="Genomic_DNA"/>
</dbReference>
<dbReference type="RefSeq" id="XP_001012497.1">
    <property type="nucleotide sequence ID" value="XM_001012497.3"/>
</dbReference>
<dbReference type="PDB" id="4V8P">
    <property type="method" value="X-ray"/>
    <property type="resolution" value="3.52 A"/>
    <property type="chains" value="BH/CH/EH/GH=1-215"/>
</dbReference>
<dbReference type="PDBsum" id="4V8P"/>
<dbReference type="SMR" id="Q235M8"/>
<dbReference type="FunCoup" id="Q235M8">
    <property type="interactions" value="244"/>
</dbReference>
<dbReference type="IntAct" id="Q235M8">
    <property type="interactions" value="1"/>
</dbReference>
<dbReference type="STRING" id="312017.Q235M8"/>
<dbReference type="EnsemblProtists" id="EAR92252">
    <property type="protein sequence ID" value="EAR92252"/>
    <property type="gene ID" value="TTHERM_01053000"/>
</dbReference>
<dbReference type="GeneID" id="7835644"/>
<dbReference type="KEGG" id="tet:TTHERM_01053000"/>
<dbReference type="eggNOG" id="KOG0857">
    <property type="taxonomic scope" value="Eukaryota"/>
</dbReference>
<dbReference type="HOGENOM" id="CLU_084051_0_0_1"/>
<dbReference type="InParanoid" id="Q235M8"/>
<dbReference type="OMA" id="HHVIREN"/>
<dbReference type="OrthoDB" id="299681at2759"/>
<dbReference type="Proteomes" id="UP000009168">
    <property type="component" value="Unassembled WGS sequence"/>
</dbReference>
<dbReference type="GO" id="GO:1990904">
    <property type="term" value="C:ribonucleoprotein complex"/>
    <property type="evidence" value="ECO:0007669"/>
    <property type="project" value="UniProtKB-KW"/>
</dbReference>
<dbReference type="GO" id="GO:0005840">
    <property type="term" value="C:ribosome"/>
    <property type="evidence" value="ECO:0007669"/>
    <property type="project" value="UniProtKB-KW"/>
</dbReference>
<dbReference type="GO" id="GO:0003735">
    <property type="term" value="F:structural constituent of ribosome"/>
    <property type="evidence" value="ECO:0007669"/>
    <property type="project" value="InterPro"/>
</dbReference>
<dbReference type="GO" id="GO:0006412">
    <property type="term" value="P:translation"/>
    <property type="evidence" value="ECO:0007669"/>
    <property type="project" value="InterPro"/>
</dbReference>
<dbReference type="CDD" id="cd01433">
    <property type="entry name" value="Ribosomal_L16_L10e"/>
    <property type="match status" value="1"/>
</dbReference>
<dbReference type="FunFam" id="3.90.1170.10:FF:000002">
    <property type="entry name" value="60S ribosomal protein L10"/>
    <property type="match status" value="1"/>
</dbReference>
<dbReference type="FunFam" id="3.30.60.300:FF:000003">
    <property type="entry name" value="60S ribosomal protein L10, putative"/>
    <property type="match status" value="1"/>
</dbReference>
<dbReference type="Gene3D" id="3.30.60.300">
    <property type="match status" value="1"/>
</dbReference>
<dbReference type="Gene3D" id="3.90.1170.10">
    <property type="entry name" value="Ribosomal protein L10e/L16"/>
    <property type="match status" value="1"/>
</dbReference>
<dbReference type="InterPro" id="IPR047873">
    <property type="entry name" value="Ribosomal_uL16"/>
</dbReference>
<dbReference type="InterPro" id="IPR018255">
    <property type="entry name" value="Ribosomal_uL16_CS_euk_arc"/>
</dbReference>
<dbReference type="InterPro" id="IPR016180">
    <property type="entry name" value="Ribosomal_uL16_dom"/>
</dbReference>
<dbReference type="InterPro" id="IPR001197">
    <property type="entry name" value="Ribosomal_uL16_euk_arch"/>
</dbReference>
<dbReference type="InterPro" id="IPR036920">
    <property type="entry name" value="Ribosomal_uL16_sf"/>
</dbReference>
<dbReference type="NCBIfam" id="NF003239">
    <property type="entry name" value="PRK04199.1-4"/>
    <property type="match status" value="1"/>
</dbReference>
<dbReference type="NCBIfam" id="TIGR00279">
    <property type="entry name" value="uL16_euk_arch"/>
    <property type="match status" value="1"/>
</dbReference>
<dbReference type="PANTHER" id="PTHR11726">
    <property type="entry name" value="60S RIBOSOMAL PROTEIN L10"/>
    <property type="match status" value="1"/>
</dbReference>
<dbReference type="Pfam" id="PF00252">
    <property type="entry name" value="Ribosomal_L16"/>
    <property type="match status" value="1"/>
</dbReference>
<dbReference type="PIRSF" id="PIRSF005590">
    <property type="entry name" value="Ribosomal_L10"/>
    <property type="match status" value="1"/>
</dbReference>
<dbReference type="SUPFAM" id="SSF54686">
    <property type="entry name" value="Ribosomal protein L16p/L10e"/>
    <property type="match status" value="1"/>
</dbReference>
<dbReference type="PROSITE" id="PS01257">
    <property type="entry name" value="RIBOSOMAL_L10E"/>
    <property type="match status" value="1"/>
</dbReference>
<protein>
    <recommendedName>
        <fullName evidence="2">Large ribosomal subunit protein uL16</fullName>
    </recommendedName>
    <alternativeName>
        <fullName>60S ribosomal protein L10</fullName>
    </alternativeName>
</protein>
<feature type="chain" id="PRO_0000413496" description="Large ribosomal subunit protein uL16">
    <location>
        <begin position="1"/>
        <end position="215"/>
    </location>
</feature>
<feature type="region of interest" description="Disordered" evidence="1">
    <location>
        <begin position="1"/>
        <end position="22"/>
    </location>
</feature>
<gene>
    <name type="primary">RPL10</name>
    <name type="ORF">TTHERM_01053000</name>
</gene>
<reference key="1">
    <citation type="journal article" date="2006" name="PLoS Biol.">
        <title>Macronuclear genome sequence of the ciliate Tetrahymena thermophila, a model eukaryote.</title>
        <authorList>
            <person name="Eisen J.A."/>
            <person name="Coyne R.S."/>
            <person name="Wu M."/>
            <person name="Wu D."/>
            <person name="Thiagarajan M."/>
            <person name="Wortman J.R."/>
            <person name="Badger J.H."/>
            <person name="Ren Q."/>
            <person name="Amedeo P."/>
            <person name="Jones K.M."/>
            <person name="Tallon L.J."/>
            <person name="Delcher A.L."/>
            <person name="Salzberg S.L."/>
            <person name="Silva J.C."/>
            <person name="Haas B.J."/>
            <person name="Majoros W.H."/>
            <person name="Farzad M."/>
            <person name="Carlton J.M."/>
            <person name="Smith R.K. Jr."/>
            <person name="Garg J."/>
            <person name="Pearlman R.E."/>
            <person name="Karrer K.M."/>
            <person name="Sun L."/>
            <person name="Manning G."/>
            <person name="Elde N.C."/>
            <person name="Turkewitz A.P."/>
            <person name="Asai D.J."/>
            <person name="Wilkes D.E."/>
            <person name="Wang Y."/>
            <person name="Cai H."/>
            <person name="Collins K."/>
            <person name="Stewart B.A."/>
            <person name="Lee S.R."/>
            <person name="Wilamowska K."/>
            <person name="Weinberg Z."/>
            <person name="Ruzzo W.L."/>
            <person name="Wloga D."/>
            <person name="Gaertig J."/>
            <person name="Frankel J."/>
            <person name="Tsao C.-C."/>
            <person name="Gorovsky M.A."/>
            <person name="Keeling P.J."/>
            <person name="Waller R.F."/>
            <person name="Patron N.J."/>
            <person name="Cherry J.M."/>
            <person name="Stover N.A."/>
            <person name="Krieger C.J."/>
            <person name="del Toro C."/>
            <person name="Ryder H.F."/>
            <person name="Williamson S.C."/>
            <person name="Barbeau R.A."/>
            <person name="Hamilton E.P."/>
            <person name="Orias E."/>
        </authorList>
    </citation>
    <scope>NUCLEOTIDE SEQUENCE [LARGE SCALE GENOMIC DNA]</scope>
    <source>
        <strain>SB210</strain>
    </source>
</reference>
<proteinExistence type="evidence at protein level"/>
<keyword id="KW-0002">3D-structure</keyword>
<keyword id="KW-1185">Reference proteome</keyword>
<keyword id="KW-0687">Ribonucleoprotein</keyword>
<keyword id="KW-0689">Ribosomal protein</keyword>
<evidence type="ECO:0000256" key="1">
    <source>
        <dbReference type="SAM" id="MobiDB-lite"/>
    </source>
</evidence>
<evidence type="ECO:0000305" key="2"/>